<organism>
    <name type="scientific">Pseudechis australis</name>
    <name type="common">Mulga snake</name>
    <name type="synonym">King brown snake</name>
    <dbReference type="NCBI Taxonomy" id="8670"/>
    <lineage>
        <taxon>Eukaryota</taxon>
        <taxon>Metazoa</taxon>
        <taxon>Chordata</taxon>
        <taxon>Craniata</taxon>
        <taxon>Vertebrata</taxon>
        <taxon>Euteleostomi</taxon>
        <taxon>Lepidosauria</taxon>
        <taxon>Squamata</taxon>
        <taxon>Bifurcata</taxon>
        <taxon>Unidentata</taxon>
        <taxon>Episquamata</taxon>
        <taxon>Toxicofera</taxon>
        <taxon>Serpentes</taxon>
        <taxon>Colubroidea</taxon>
        <taxon>Elapidae</taxon>
        <taxon>Hydrophiinae</taxon>
        <taxon>Pseudechis</taxon>
    </lineage>
</organism>
<feature type="signal peptide" evidence="3">
    <location>
        <begin position="1"/>
        <end position="21"/>
    </location>
</feature>
<feature type="chain" id="PRO_0000093562" description="Long neurotoxin homolog Pa ID">
    <location>
        <begin position="22"/>
        <end position="89"/>
    </location>
</feature>
<feature type="disulfide bond" evidence="1">
    <location>
        <begin position="24"/>
        <end position="42"/>
    </location>
</feature>
<feature type="disulfide bond" evidence="1">
    <location>
        <begin position="35"/>
        <end position="63"/>
    </location>
</feature>
<feature type="disulfide bond" evidence="1">
    <location>
        <begin position="48"/>
        <end position="52"/>
    </location>
</feature>
<feature type="disulfide bond" evidence="1">
    <location>
        <begin position="67"/>
        <end position="78"/>
    </location>
</feature>
<feature type="disulfide bond" evidence="1">
    <location>
        <begin position="79"/>
        <end position="84"/>
    </location>
</feature>
<proteinExistence type="evidence at protein level"/>
<name>3L2H_PSEAU</name>
<comment type="function">
    <text evidence="2">Binds with high affinity to muscular (alpha-1/CHRNA1) and neuronal (alpha-7/CHRNA7) nicotinic acetylcholine receptor (nAChR) and inhibits acetylcholine from binding to the receptor, thereby impairing neuromuscular and neuronal transmission.</text>
</comment>
<comment type="subcellular location">
    <subcellularLocation>
        <location evidence="3">Secreted</location>
    </subcellularLocation>
</comment>
<comment type="tissue specificity">
    <text evidence="4">Expressed by the venom gland.</text>
</comment>
<comment type="miscellaneous">
    <text evidence="3">Negative results: does not show binding activity to the acetylcholine receptor of an electric ray eel nor lethal effect on mice.</text>
</comment>
<comment type="similarity">
    <text evidence="4">Belongs to the three-finger toxin family. Long-chain subfamily. Type II alpha-neurotoxin sub-subfamily.</text>
</comment>
<protein>
    <recommendedName>
        <fullName>Long neurotoxin homolog Pa ID</fullName>
        <shortName>LNTX-ID</shortName>
    </recommendedName>
</protein>
<accession>P14612</accession>
<accession>A8HDK5</accession>
<sequence length="89" mass="10084">MKTLLLTLVVVTIMCLDLGYTLTCYKGRDRSSETCRSEQELCCTKTWCDQWCQDRGPRLEMGCTATCPRRMPGLDFTCCTTDNCNPVPT</sequence>
<reference key="1">
    <citation type="journal article" date="2007" name="Cell. Mol. Life Sci.">
        <title>Distinct activities of novel neurotoxins from Australian venomous snakes for nicotinic acetylcholine receptors.</title>
        <authorList>
            <person name="St Pierre L."/>
            <person name="Fischer H."/>
            <person name="Adams D.J."/>
            <person name="Schenning M."/>
            <person name="Lavidis N."/>
            <person name="de Jersey J."/>
            <person name="Masci P.P."/>
            <person name="Lavin M.F."/>
        </authorList>
    </citation>
    <scope>NUCLEOTIDE SEQUENCE [MRNA]</scope>
    <source>
        <tissue>Venom gland</tissue>
    </source>
</reference>
<reference key="2">
    <citation type="journal article" date="1989" name="J. Biochem.">
        <title>Amino acid sequence of a long-chain neurotoxin homologue, Pa ID, from the venom of an Australian elapid snake, Pseudechis australis.</title>
        <authorList>
            <person name="Takasaki C."/>
        </authorList>
    </citation>
    <scope>PROTEIN SEQUENCE OF 22-89</scope>
    <scope>SUBCELLULAR LOCATION</scope>
    <source>
        <tissue>Venom</tissue>
    </source>
</reference>
<dbReference type="EMBL" id="DQ917510">
    <property type="protein sequence ID" value="ABK63539.1"/>
    <property type="molecule type" value="mRNA"/>
</dbReference>
<dbReference type="PIR" id="JU0034">
    <property type="entry name" value="JU0034"/>
</dbReference>
<dbReference type="SMR" id="P14612"/>
<dbReference type="GO" id="GO:0005576">
    <property type="term" value="C:extracellular region"/>
    <property type="evidence" value="ECO:0007669"/>
    <property type="project" value="UniProtKB-SubCell"/>
</dbReference>
<dbReference type="GO" id="GO:0030550">
    <property type="term" value="F:acetylcholine receptor inhibitor activity"/>
    <property type="evidence" value="ECO:0007669"/>
    <property type="project" value="UniProtKB-KW"/>
</dbReference>
<dbReference type="GO" id="GO:0099106">
    <property type="term" value="F:ion channel regulator activity"/>
    <property type="evidence" value="ECO:0007669"/>
    <property type="project" value="UniProtKB-KW"/>
</dbReference>
<dbReference type="GO" id="GO:0090729">
    <property type="term" value="F:toxin activity"/>
    <property type="evidence" value="ECO:0007669"/>
    <property type="project" value="UniProtKB-KW"/>
</dbReference>
<dbReference type="CDD" id="cd00206">
    <property type="entry name" value="TFP_snake_toxin"/>
    <property type="match status" value="1"/>
</dbReference>
<dbReference type="Gene3D" id="2.10.60.10">
    <property type="entry name" value="CD59"/>
    <property type="match status" value="1"/>
</dbReference>
<dbReference type="InterPro" id="IPR003571">
    <property type="entry name" value="Snake_3FTx"/>
</dbReference>
<dbReference type="InterPro" id="IPR045860">
    <property type="entry name" value="Snake_toxin-like_sf"/>
</dbReference>
<dbReference type="InterPro" id="IPR018354">
    <property type="entry name" value="Snake_toxin_con_site"/>
</dbReference>
<dbReference type="InterPro" id="IPR054131">
    <property type="entry name" value="Toxin_cobra-type"/>
</dbReference>
<dbReference type="Pfam" id="PF21947">
    <property type="entry name" value="Toxin_cobra-type"/>
    <property type="match status" value="1"/>
</dbReference>
<dbReference type="SUPFAM" id="SSF57302">
    <property type="entry name" value="Snake toxin-like"/>
    <property type="match status" value="1"/>
</dbReference>
<dbReference type="PROSITE" id="PS00272">
    <property type="entry name" value="SNAKE_TOXIN"/>
    <property type="match status" value="1"/>
</dbReference>
<keyword id="KW-0008">Acetylcholine receptor inhibiting toxin</keyword>
<keyword id="KW-0903">Direct protein sequencing</keyword>
<keyword id="KW-1015">Disulfide bond</keyword>
<keyword id="KW-0872">Ion channel impairing toxin</keyword>
<keyword id="KW-0528">Neurotoxin</keyword>
<keyword id="KW-0629">Postsynaptic neurotoxin</keyword>
<keyword id="KW-0964">Secreted</keyword>
<keyword id="KW-0732">Signal</keyword>
<keyword id="KW-0800">Toxin</keyword>
<evidence type="ECO:0000250" key="1"/>
<evidence type="ECO:0000250" key="2">
    <source>
        <dbReference type="UniProtKB" id="P60615"/>
    </source>
</evidence>
<evidence type="ECO:0000269" key="3">
    <source>
    </source>
</evidence>
<evidence type="ECO:0000305" key="4"/>